<gene>
    <name type="primary">pelY</name>
    <name type="ordered locus">YPTB3834</name>
</gene>
<evidence type="ECO:0000305" key="1"/>
<comment type="catalytic activity">
    <reaction>
        <text>Eliminative cleavage of (1-&gt;4)-alpha-D-galacturonan to give oligosaccharides with 4-deoxy-alpha-D-galact-4-enuronosyl groups at their non-reducing ends.</text>
        <dbReference type="EC" id="4.2.2.2"/>
    </reaction>
</comment>
<comment type="pathway">
    <text>Glycan metabolism; pectin degradation; 2-dehydro-3-deoxy-D-gluconate from pectin: step 2/5.</text>
</comment>
<comment type="subcellular location">
    <subcellularLocation>
        <location>Periplasm</location>
    </subcellularLocation>
</comment>
<comment type="similarity">
    <text evidence="1">Belongs to the polysaccharide lyase 2 family.</text>
</comment>
<comment type="sequence caution" evidence="1">
    <conflict type="frameshift">
        <sequence resource="EMBL-CDS" id="AAA27660"/>
    </conflict>
</comment>
<reference key="1">
    <citation type="journal article" date="1988" name="J. Bacteriol.">
        <title>Molecular cloning and sequencing of a pectate lyase gene from Yersinia pseudotuberculosis.</title>
        <authorList>
            <person name="Manulis S."/>
            <person name="Kobayashi D.Y."/>
            <person name="Keen N.T."/>
        </authorList>
    </citation>
    <scope>NUCLEOTIDE SEQUENCE [GENOMIC DNA]</scope>
    <source>
        <strain>ICBP 3821</strain>
    </source>
</reference>
<reference key="2">
    <citation type="journal article" date="2004" name="Proc. Natl. Acad. Sci. U.S.A.">
        <title>Insights into the evolution of Yersinia pestis through whole-genome comparison with Yersinia pseudotuberculosis.</title>
        <authorList>
            <person name="Chain P.S.G."/>
            <person name="Carniel E."/>
            <person name="Larimer F.W."/>
            <person name="Lamerdin J."/>
            <person name="Stoutland P.O."/>
            <person name="Regala W.M."/>
            <person name="Georgescu A.M."/>
            <person name="Vergez L.M."/>
            <person name="Land M.L."/>
            <person name="Motin V.L."/>
            <person name="Brubaker R.R."/>
            <person name="Fowler J."/>
            <person name="Hinnebusch J."/>
            <person name="Marceau M."/>
            <person name="Medigue C."/>
            <person name="Simonet M."/>
            <person name="Chenal-Francisque V."/>
            <person name="Souza B."/>
            <person name="Dacheux D."/>
            <person name="Elliott J.M."/>
            <person name="Derbise A."/>
            <person name="Hauser L.J."/>
            <person name="Garcia E."/>
        </authorList>
    </citation>
    <scope>NUCLEOTIDE SEQUENCE [LARGE SCALE GENOMIC DNA]</scope>
    <source>
        <strain>IP32953</strain>
    </source>
</reference>
<sequence length="572" mass="64115">MKKRALLLSMSVLAMLYIPAGQAAEIDRLTVVKQYVDNVLNKASDTYHGDKPSPLLADGVDPRTGQQMEWIFPDGRRAVLSNFSAQQNLMRVMSGLSELSGDPQYQKRAEDIVRYHFQNYQDNSGLLYWGGHRFVDLKTLQPEGPSEKEKVHELKNAYPYYDLMFSVDSDATTRFIRGFWNAHVYDWRILETSRHGEYGKPMGALWESTFEQQPPFFATKGLSFLNAGNDLIYSASLLYKYQQDQGALVWAKRLADQYVLPRDAKTGLGVYQFTQALKREEPTDDADTHSKFGDRAQRQFGPEFGPTALEGNMMLKGRTSTLYSENALMQLQLGKDLGGQGDDLLKWTVDGLKAFAKYGYNEQDNTFRPMIANGQDLSNYTLPRDGYYGKKGSVLKPYKAGNEFLISYARAYAVDNDPLLWKVARGIASDQGLGDIGSAPGKEMKVKLDTTNSDPYALFALLDLYNASQVAEYRSLAEKVADNIIKTRYIDGFFMASPDRQYADVDAIEPYALLALEASLRNKPQAVAPFLNGAGFTEGAYLMADGSARISTRDNELFLLNVGETLQPNGRK</sequence>
<proteinExistence type="inferred from homology"/>
<feature type="signal peptide">
    <location>
        <begin position="1"/>
        <end position="23"/>
    </location>
</feature>
<feature type="chain" id="PRO_0000024911" description="Periplasmic pectate lyase">
    <location>
        <begin position="24"/>
        <end position="572"/>
    </location>
</feature>
<keyword id="KW-0456">Lyase</keyword>
<keyword id="KW-0574">Periplasm</keyword>
<keyword id="KW-0732">Signal</keyword>
<organism>
    <name type="scientific">Yersinia pseudotuberculosis serotype I (strain IP32953)</name>
    <dbReference type="NCBI Taxonomy" id="273123"/>
    <lineage>
        <taxon>Bacteria</taxon>
        <taxon>Pseudomonadati</taxon>
        <taxon>Pseudomonadota</taxon>
        <taxon>Gammaproteobacteria</taxon>
        <taxon>Enterobacterales</taxon>
        <taxon>Yersiniaceae</taxon>
        <taxon>Yersinia</taxon>
    </lineage>
</organism>
<protein>
    <recommendedName>
        <fullName>Periplasmic pectate lyase</fullName>
        <ecNumber>4.2.2.2</ecNumber>
    </recommendedName>
</protein>
<dbReference type="EC" id="4.2.2.2"/>
<dbReference type="EMBL" id="M19399">
    <property type="protein sequence ID" value="AAA27660.1"/>
    <property type="status" value="ALT_FRAME"/>
    <property type="molecule type" value="Genomic_DNA"/>
</dbReference>
<dbReference type="EMBL" id="BX936398">
    <property type="protein sequence ID" value="CAH23072.1"/>
    <property type="molecule type" value="Genomic_DNA"/>
</dbReference>
<dbReference type="PIR" id="A27742">
    <property type="entry name" value="WZEPPY"/>
</dbReference>
<dbReference type="RefSeq" id="WP_002209555.1">
    <property type="nucleotide sequence ID" value="NZ_CP009712.1"/>
</dbReference>
<dbReference type="SMR" id="P11278"/>
<dbReference type="CAZy" id="PL2">
    <property type="family name" value="Polysaccharide Lyase Family 2"/>
</dbReference>
<dbReference type="KEGG" id="ypo:BZ17_2750"/>
<dbReference type="KEGG" id="yps:YPTB3834"/>
<dbReference type="PATRIC" id="fig|273123.14.peg.2882"/>
<dbReference type="UniPathway" id="UPA00545">
    <property type="reaction ID" value="UER00824"/>
</dbReference>
<dbReference type="Proteomes" id="UP000001011">
    <property type="component" value="Chromosome"/>
</dbReference>
<dbReference type="GO" id="GO:0042597">
    <property type="term" value="C:periplasmic space"/>
    <property type="evidence" value="ECO:0007669"/>
    <property type="project" value="UniProtKB-SubCell"/>
</dbReference>
<dbReference type="GO" id="GO:0030570">
    <property type="term" value="F:pectate lyase activity"/>
    <property type="evidence" value="ECO:0007669"/>
    <property type="project" value="UniProtKB-EC"/>
</dbReference>
<dbReference type="GO" id="GO:0045490">
    <property type="term" value="P:pectin catabolic process"/>
    <property type="evidence" value="ECO:0007669"/>
    <property type="project" value="UniProtKB-UniPathway"/>
</dbReference>
<dbReference type="Gene3D" id="1.50.10.20">
    <property type="match status" value="1"/>
</dbReference>
<dbReference type="Gene3D" id="2.30.30.880">
    <property type="match status" value="1"/>
</dbReference>
<dbReference type="Gene3D" id="3.90.105.40">
    <property type="match status" value="1"/>
</dbReference>
<dbReference type="InterPro" id="IPR010702">
    <property type="entry name" value="Pectate_lyase_2"/>
</dbReference>
<dbReference type="Pfam" id="PF06917">
    <property type="entry name" value="Pectate_lyase_2"/>
    <property type="match status" value="1"/>
</dbReference>
<dbReference type="PIRSF" id="PIRSF001432">
    <property type="entry name" value="Pect_lyase"/>
    <property type="match status" value="1"/>
</dbReference>
<accession>P11278</accession>
<accession>Q664D5</accession>
<name>PLYP_YERPS</name>